<keyword id="KW-0963">Cytoplasm</keyword>
<keyword id="KW-0255">Endonuclease</keyword>
<keyword id="KW-0378">Hydrolase</keyword>
<keyword id="KW-0479">Metal-binding</keyword>
<keyword id="KW-0540">Nuclease</keyword>
<keyword id="KW-1185">Reference proteome</keyword>
<keyword id="KW-0690">Ribosome biogenesis</keyword>
<keyword id="KW-0698">rRNA processing</keyword>
<keyword id="KW-0862">Zinc</keyword>
<name>YBEY_ALCBS</name>
<reference key="1">
    <citation type="journal article" date="2006" name="Nat. Biotechnol.">
        <title>Genome sequence of the ubiquitous hydrocarbon-degrading marine bacterium Alcanivorax borkumensis.</title>
        <authorList>
            <person name="Schneiker S."/>
            <person name="Martins dos Santos V.A.P."/>
            <person name="Bartels D."/>
            <person name="Bekel T."/>
            <person name="Brecht M."/>
            <person name="Buhrmester J."/>
            <person name="Chernikova T.N."/>
            <person name="Denaro R."/>
            <person name="Ferrer M."/>
            <person name="Gertler C."/>
            <person name="Goesmann A."/>
            <person name="Golyshina O.V."/>
            <person name="Kaminski F."/>
            <person name="Khachane A.N."/>
            <person name="Lang S."/>
            <person name="Linke B."/>
            <person name="McHardy A.C."/>
            <person name="Meyer F."/>
            <person name="Nechitaylo T."/>
            <person name="Puehler A."/>
            <person name="Regenhardt D."/>
            <person name="Rupp O."/>
            <person name="Sabirova J.S."/>
            <person name="Selbitschka W."/>
            <person name="Yakimov M.M."/>
            <person name="Timmis K.N."/>
            <person name="Vorhoelter F.-J."/>
            <person name="Weidner S."/>
            <person name="Kaiser O."/>
            <person name="Golyshin P.N."/>
        </authorList>
    </citation>
    <scope>NUCLEOTIDE SEQUENCE [LARGE SCALE GENOMIC DNA]</scope>
    <source>
        <strain>ATCC 700651 / DSM 11573 / NCIMB 13689 / SK2</strain>
    </source>
</reference>
<protein>
    <recommendedName>
        <fullName evidence="1">Endoribonuclease YbeY</fullName>
        <ecNumber evidence="1">3.1.-.-</ecNumber>
    </recommendedName>
</protein>
<evidence type="ECO:0000255" key="1">
    <source>
        <dbReference type="HAMAP-Rule" id="MF_00009"/>
    </source>
</evidence>
<evidence type="ECO:0000256" key="2">
    <source>
        <dbReference type="SAM" id="MobiDB-lite"/>
    </source>
</evidence>
<proteinExistence type="inferred from homology"/>
<dbReference type="EC" id="3.1.-.-" evidence="1"/>
<dbReference type="EMBL" id="AM286690">
    <property type="protein sequence ID" value="CAL17384.1"/>
    <property type="molecule type" value="Genomic_DNA"/>
</dbReference>
<dbReference type="RefSeq" id="WP_011589215.1">
    <property type="nucleotide sequence ID" value="NC_008260.1"/>
</dbReference>
<dbReference type="SMR" id="Q0VN64"/>
<dbReference type="STRING" id="393595.ABO_1936"/>
<dbReference type="KEGG" id="abo:ABO_1936"/>
<dbReference type="eggNOG" id="COG0319">
    <property type="taxonomic scope" value="Bacteria"/>
</dbReference>
<dbReference type="HOGENOM" id="CLU_106710_0_1_6"/>
<dbReference type="OrthoDB" id="9807740at2"/>
<dbReference type="Proteomes" id="UP000008871">
    <property type="component" value="Chromosome"/>
</dbReference>
<dbReference type="GO" id="GO:0005737">
    <property type="term" value="C:cytoplasm"/>
    <property type="evidence" value="ECO:0007669"/>
    <property type="project" value="UniProtKB-SubCell"/>
</dbReference>
<dbReference type="GO" id="GO:0004222">
    <property type="term" value="F:metalloendopeptidase activity"/>
    <property type="evidence" value="ECO:0007669"/>
    <property type="project" value="InterPro"/>
</dbReference>
<dbReference type="GO" id="GO:0004521">
    <property type="term" value="F:RNA endonuclease activity"/>
    <property type="evidence" value="ECO:0007669"/>
    <property type="project" value="UniProtKB-UniRule"/>
</dbReference>
<dbReference type="GO" id="GO:0008270">
    <property type="term" value="F:zinc ion binding"/>
    <property type="evidence" value="ECO:0007669"/>
    <property type="project" value="UniProtKB-UniRule"/>
</dbReference>
<dbReference type="GO" id="GO:0006364">
    <property type="term" value="P:rRNA processing"/>
    <property type="evidence" value="ECO:0007669"/>
    <property type="project" value="UniProtKB-UniRule"/>
</dbReference>
<dbReference type="Gene3D" id="3.40.390.30">
    <property type="entry name" value="Metalloproteases ('zincins'), catalytic domain"/>
    <property type="match status" value="1"/>
</dbReference>
<dbReference type="HAMAP" id="MF_00009">
    <property type="entry name" value="Endoribonucl_YbeY"/>
    <property type="match status" value="1"/>
</dbReference>
<dbReference type="InterPro" id="IPR023091">
    <property type="entry name" value="MetalPrtase_cat_dom_sf_prd"/>
</dbReference>
<dbReference type="InterPro" id="IPR002036">
    <property type="entry name" value="YbeY"/>
</dbReference>
<dbReference type="InterPro" id="IPR020549">
    <property type="entry name" value="YbeY_CS"/>
</dbReference>
<dbReference type="NCBIfam" id="TIGR00043">
    <property type="entry name" value="rRNA maturation RNase YbeY"/>
    <property type="match status" value="1"/>
</dbReference>
<dbReference type="PANTHER" id="PTHR46986">
    <property type="entry name" value="ENDORIBONUCLEASE YBEY, CHLOROPLASTIC"/>
    <property type="match status" value="1"/>
</dbReference>
<dbReference type="PANTHER" id="PTHR46986:SF1">
    <property type="entry name" value="ENDORIBONUCLEASE YBEY, CHLOROPLASTIC"/>
    <property type="match status" value="1"/>
</dbReference>
<dbReference type="Pfam" id="PF02130">
    <property type="entry name" value="YbeY"/>
    <property type="match status" value="1"/>
</dbReference>
<dbReference type="SUPFAM" id="SSF55486">
    <property type="entry name" value="Metalloproteases ('zincins'), catalytic domain"/>
    <property type="match status" value="1"/>
</dbReference>
<dbReference type="PROSITE" id="PS01306">
    <property type="entry name" value="UPF0054"/>
    <property type="match status" value="1"/>
</dbReference>
<sequence length="175" mass="19302">MNGIPTPTVDIQWASDAPDAPDETHLCEWVRHAAIAAGGVVGDITLRIVDEEEIRTLNRDYRDKDAPTNVLSFPFEMPEGLPEGAMDPLVGDIIICAAVVRREANEQHKPLVAHWAHMVTHGVLHLLGYDHIDDDDAIVMETLEIRALGELGFPDPYSPAQQESQAQPENTELNP</sequence>
<gene>
    <name evidence="1" type="primary">ybeY</name>
    <name type="ordered locus">ABO_1936</name>
</gene>
<comment type="function">
    <text evidence="1">Single strand-specific metallo-endoribonuclease involved in late-stage 70S ribosome quality control and in maturation of the 3' terminus of the 16S rRNA.</text>
</comment>
<comment type="cofactor">
    <cofactor evidence="1">
        <name>Zn(2+)</name>
        <dbReference type="ChEBI" id="CHEBI:29105"/>
    </cofactor>
    <text evidence="1">Binds 1 zinc ion.</text>
</comment>
<comment type="subcellular location">
    <subcellularLocation>
        <location evidence="1">Cytoplasm</location>
    </subcellularLocation>
</comment>
<comment type="similarity">
    <text evidence="1">Belongs to the endoribonuclease YbeY family.</text>
</comment>
<feature type="chain" id="PRO_0000284153" description="Endoribonuclease YbeY">
    <location>
        <begin position="1"/>
        <end position="175"/>
    </location>
</feature>
<feature type="region of interest" description="Disordered" evidence="2">
    <location>
        <begin position="154"/>
        <end position="175"/>
    </location>
</feature>
<feature type="compositionally biased region" description="Polar residues" evidence="2">
    <location>
        <begin position="159"/>
        <end position="175"/>
    </location>
</feature>
<feature type="binding site" evidence="1">
    <location>
        <position position="121"/>
    </location>
    <ligand>
        <name>Zn(2+)</name>
        <dbReference type="ChEBI" id="CHEBI:29105"/>
        <note>catalytic</note>
    </ligand>
</feature>
<feature type="binding site" evidence="1">
    <location>
        <position position="125"/>
    </location>
    <ligand>
        <name>Zn(2+)</name>
        <dbReference type="ChEBI" id="CHEBI:29105"/>
        <note>catalytic</note>
    </ligand>
</feature>
<feature type="binding site" evidence="1">
    <location>
        <position position="131"/>
    </location>
    <ligand>
        <name>Zn(2+)</name>
        <dbReference type="ChEBI" id="CHEBI:29105"/>
        <note>catalytic</note>
    </ligand>
</feature>
<organism>
    <name type="scientific">Alcanivorax borkumensis (strain ATCC 700651 / DSM 11573 / NCIMB 13689 / SK2)</name>
    <dbReference type="NCBI Taxonomy" id="393595"/>
    <lineage>
        <taxon>Bacteria</taxon>
        <taxon>Pseudomonadati</taxon>
        <taxon>Pseudomonadota</taxon>
        <taxon>Gammaproteobacteria</taxon>
        <taxon>Oceanospirillales</taxon>
        <taxon>Alcanivoracaceae</taxon>
        <taxon>Alcanivorax</taxon>
    </lineage>
</organism>
<accession>Q0VN64</accession>